<comment type="function">
    <text evidence="3">Endosperm-specific cysteine-rich protein that acts downstream of BHLH95/ZOU to modify the interface between embryo and endosperm and mediate the separation of these two tissues during seed development. Necessary for the biogenesis of the embryo sheath, an extracuticular endosperm-derived structure at the surface of the embryo. Required for the separation of embryo and endosperm, and for normal progression of the embryo through the endosperm tissue. Required for the formation of a normal embryonic cuticle.</text>
</comment>
<comment type="subcellular location">
    <subcellularLocation>
        <location evidence="7">Secreted</location>
    </subcellularLocation>
</comment>
<comment type="developmental stage">
    <text evidence="3">Specifically expressed in seed endosperm at torpedo stage embryo development.</text>
</comment>
<comment type="disruption phenotype">
    <text evidence="3">Increased embryonic cuticule permeability. Altered cotyledon development. Cup-shaped cotyledons.</text>
</comment>
<comment type="similarity">
    <text evidence="6">Belongs to the STIG1 family.</text>
</comment>
<comment type="sequence caution" evidence="6">
    <conflict type="erroneous initiation">
        <sequence resource="EMBL-CDS" id="AAF87870"/>
    </conflict>
    <text>Truncated N-terminus.</text>
</comment>
<name>STGL4_ARATH</name>
<organism>
    <name type="scientific">Arabidopsis thaliana</name>
    <name type="common">Mouse-ear cress</name>
    <dbReference type="NCBI Taxonomy" id="3702"/>
    <lineage>
        <taxon>Eukaryota</taxon>
        <taxon>Viridiplantae</taxon>
        <taxon>Streptophyta</taxon>
        <taxon>Embryophyta</taxon>
        <taxon>Tracheophyta</taxon>
        <taxon>Spermatophyta</taxon>
        <taxon>Magnoliopsida</taxon>
        <taxon>eudicotyledons</taxon>
        <taxon>Gunneridae</taxon>
        <taxon>Pentapetalae</taxon>
        <taxon>rosids</taxon>
        <taxon>malvids</taxon>
        <taxon>Brassicales</taxon>
        <taxon>Brassicaceae</taxon>
        <taxon>Camelineae</taxon>
        <taxon>Arabidopsis</taxon>
    </lineage>
</organism>
<sequence length="174" mass="19531">MMSIKLTLCALIFFLLNSLLHHVLGHDNQLNTTSSWLKSHIKAATTTNWGRPKPPMCKPWICKRSGPSEARMRCCRNQCVDVLSDPNHCRFCFKSCRFALSCCDGDCVDTNTDPSNCGQCGNECESGAPCEFGMCGYAAPSSQPGKRHRRHKFHRPRPPPSPDSKLNYDDHDDE</sequence>
<evidence type="ECO:0000255" key="1"/>
<evidence type="ECO:0000256" key="2">
    <source>
        <dbReference type="SAM" id="MobiDB-lite"/>
    </source>
</evidence>
<evidence type="ECO:0000269" key="3">
    <source>
    </source>
</evidence>
<evidence type="ECO:0000303" key="4">
    <source>
    </source>
</evidence>
<evidence type="ECO:0000303" key="5">
    <source>
    </source>
</evidence>
<evidence type="ECO:0000305" key="6"/>
<evidence type="ECO:0000305" key="7">
    <source>
    </source>
</evidence>
<evidence type="ECO:0000312" key="8">
    <source>
        <dbReference type="Araport" id="AT1G50650"/>
    </source>
</evidence>
<evidence type="ECO:0000312" key="9">
    <source>
        <dbReference type="EMBL" id="AAF87870.1"/>
    </source>
</evidence>
<evidence type="ECO:0000312" key="10">
    <source>
        <dbReference type="EMBL" id="AAG51203.1"/>
    </source>
</evidence>
<proteinExistence type="evidence at transcript level"/>
<protein>
    <recommendedName>
        <fullName evidence="4">Stigma-specific STIG1-like protein 4</fullName>
    </recommendedName>
    <alternativeName>
        <fullName evidence="5">Protein KERBEROS</fullName>
    </alternativeName>
</protein>
<gene>
    <name evidence="5" type="primary">KRS</name>
    <name evidence="8" type="ordered locus">At1g50650</name>
    <name evidence="9" type="ORF">F11F12.3</name>
    <name evidence="10" type="ORF">F17J6.17</name>
</gene>
<keyword id="KW-0217">Developmental protein</keyword>
<keyword id="KW-1185">Reference proteome</keyword>
<keyword id="KW-0964">Secreted</keyword>
<keyword id="KW-0732">Signal</keyword>
<feature type="signal peptide" evidence="1">
    <location>
        <begin position="1"/>
        <end position="25"/>
    </location>
</feature>
<feature type="chain" id="PRO_0000431933" description="Stigma-specific STIG1-like protein 4" evidence="1">
    <location>
        <begin position="26"/>
        <end position="174"/>
    </location>
</feature>
<feature type="region of interest" description="Disordered" evidence="2">
    <location>
        <begin position="140"/>
        <end position="174"/>
    </location>
</feature>
<feature type="compositionally biased region" description="Basic residues" evidence="2">
    <location>
        <begin position="145"/>
        <end position="157"/>
    </location>
</feature>
<accession>Q9C6P6</accession>
<accession>Q9LPT4</accession>
<reference key="1">
    <citation type="journal article" date="2000" name="Nature">
        <title>Sequence and analysis of chromosome 1 of the plant Arabidopsis thaliana.</title>
        <authorList>
            <person name="Theologis A."/>
            <person name="Ecker J.R."/>
            <person name="Palm C.J."/>
            <person name="Federspiel N.A."/>
            <person name="Kaul S."/>
            <person name="White O."/>
            <person name="Alonso J."/>
            <person name="Altafi H."/>
            <person name="Araujo R."/>
            <person name="Bowman C.L."/>
            <person name="Brooks S.Y."/>
            <person name="Buehler E."/>
            <person name="Chan A."/>
            <person name="Chao Q."/>
            <person name="Chen H."/>
            <person name="Cheuk R.F."/>
            <person name="Chin C.W."/>
            <person name="Chung M.K."/>
            <person name="Conn L."/>
            <person name="Conway A.B."/>
            <person name="Conway A.R."/>
            <person name="Creasy T.H."/>
            <person name="Dewar K."/>
            <person name="Dunn P."/>
            <person name="Etgu P."/>
            <person name="Feldblyum T.V."/>
            <person name="Feng J.-D."/>
            <person name="Fong B."/>
            <person name="Fujii C.Y."/>
            <person name="Gill J.E."/>
            <person name="Goldsmith A.D."/>
            <person name="Haas B."/>
            <person name="Hansen N.F."/>
            <person name="Hughes B."/>
            <person name="Huizar L."/>
            <person name="Hunter J.L."/>
            <person name="Jenkins J."/>
            <person name="Johnson-Hopson C."/>
            <person name="Khan S."/>
            <person name="Khaykin E."/>
            <person name="Kim C.J."/>
            <person name="Koo H.L."/>
            <person name="Kremenetskaia I."/>
            <person name="Kurtz D.B."/>
            <person name="Kwan A."/>
            <person name="Lam B."/>
            <person name="Langin-Hooper S."/>
            <person name="Lee A."/>
            <person name="Lee J.M."/>
            <person name="Lenz C.A."/>
            <person name="Li J.H."/>
            <person name="Li Y.-P."/>
            <person name="Lin X."/>
            <person name="Liu S.X."/>
            <person name="Liu Z.A."/>
            <person name="Luros J.S."/>
            <person name="Maiti R."/>
            <person name="Marziali A."/>
            <person name="Militscher J."/>
            <person name="Miranda M."/>
            <person name="Nguyen M."/>
            <person name="Nierman W.C."/>
            <person name="Osborne B.I."/>
            <person name="Pai G."/>
            <person name="Peterson J."/>
            <person name="Pham P.K."/>
            <person name="Rizzo M."/>
            <person name="Rooney T."/>
            <person name="Rowley D."/>
            <person name="Sakano H."/>
            <person name="Salzberg S.L."/>
            <person name="Schwartz J.R."/>
            <person name="Shinn P."/>
            <person name="Southwick A.M."/>
            <person name="Sun H."/>
            <person name="Tallon L.J."/>
            <person name="Tambunga G."/>
            <person name="Toriumi M.J."/>
            <person name="Town C.D."/>
            <person name="Utterback T."/>
            <person name="Van Aken S."/>
            <person name="Vaysberg M."/>
            <person name="Vysotskaia V.S."/>
            <person name="Walker M."/>
            <person name="Wu D."/>
            <person name="Yu G."/>
            <person name="Fraser C.M."/>
            <person name="Venter J.C."/>
            <person name="Davis R.W."/>
        </authorList>
    </citation>
    <scope>NUCLEOTIDE SEQUENCE [LARGE SCALE GENOMIC DNA]</scope>
    <source>
        <strain>cv. Columbia</strain>
    </source>
</reference>
<reference key="2">
    <citation type="journal article" date="2017" name="Plant J.">
        <title>Araport11: a complete reannotation of the Arabidopsis thaliana reference genome.</title>
        <authorList>
            <person name="Cheng C.Y."/>
            <person name="Krishnakumar V."/>
            <person name="Chan A.P."/>
            <person name="Thibaud-Nissen F."/>
            <person name="Schobel S."/>
            <person name="Town C.D."/>
        </authorList>
    </citation>
    <scope>GENOME REANNOTATION</scope>
    <source>
        <strain>cv. Columbia</strain>
    </source>
</reference>
<reference key="3">
    <citation type="journal article" date="2009" name="Proc. Natl. Acad. Sci. U.S.A.">
        <title>Arabidopsis GRI is involved in the regulation of cell death induced by extracellular ROS.</title>
        <authorList>
            <person name="Wrzaczek M."/>
            <person name="Brosche M."/>
            <person name="Kollist H."/>
            <person name="Kangasjarvi J."/>
        </authorList>
    </citation>
    <scope>GENE FAMILY</scope>
</reference>
<reference key="4">
    <citation type="journal article" date="2017" name="Plant Cell">
        <title>ZHOUPI and KERBEROS mediate embryo/endosperm separation by promoting the formation of an extra-cuticular sheath at the embryo surface.</title>
        <authorList>
            <person name="Moussu S.A."/>
            <person name="Doll N.M."/>
            <person name="Chamot S."/>
            <person name="Brocard L."/>
            <person name="Creff A."/>
            <person name="Fourquin C."/>
            <person name="Widiez T."/>
            <person name="Nimchuk Z.L."/>
            <person name="Ingram G.C."/>
        </authorList>
    </citation>
    <scope>FUNCTION</scope>
    <scope>SUBCELLULAR LOCATION</scope>
    <scope>DEVELOPMENTAL STAGE</scope>
    <scope>DISRUPTION PHENOTYPE</scope>
</reference>
<dbReference type="EMBL" id="AC012561">
    <property type="protein sequence ID" value="AAF87870.1"/>
    <property type="status" value="ALT_INIT"/>
    <property type="molecule type" value="Genomic_DNA"/>
</dbReference>
<dbReference type="EMBL" id="AC079279">
    <property type="protein sequence ID" value="AAG51203.1"/>
    <property type="molecule type" value="Genomic_DNA"/>
</dbReference>
<dbReference type="EMBL" id="CP002684">
    <property type="protein sequence ID" value="AEE32575.1"/>
    <property type="molecule type" value="Genomic_DNA"/>
</dbReference>
<dbReference type="PIR" id="B96543">
    <property type="entry name" value="B96543"/>
</dbReference>
<dbReference type="RefSeq" id="NP_175480.1">
    <property type="nucleotide sequence ID" value="NM_103947.2"/>
</dbReference>
<dbReference type="STRING" id="3702.Q9C6P6"/>
<dbReference type="PaxDb" id="3702-AT1G50650.1"/>
<dbReference type="ProteomicsDB" id="228347"/>
<dbReference type="EnsemblPlants" id="AT1G50650.1">
    <property type="protein sequence ID" value="AT1G50650.1"/>
    <property type="gene ID" value="AT1G50650"/>
</dbReference>
<dbReference type="GeneID" id="841487"/>
<dbReference type="Gramene" id="AT1G50650.1">
    <property type="protein sequence ID" value="AT1G50650.1"/>
    <property type="gene ID" value="AT1G50650"/>
</dbReference>
<dbReference type="KEGG" id="ath:AT1G50650"/>
<dbReference type="Araport" id="AT1G50650"/>
<dbReference type="TAIR" id="AT1G50650">
    <property type="gene designation" value="KRS"/>
</dbReference>
<dbReference type="eggNOG" id="ENOG502S2JZ">
    <property type="taxonomic scope" value="Eukaryota"/>
</dbReference>
<dbReference type="HOGENOM" id="CLU_111795_1_0_1"/>
<dbReference type="InParanoid" id="Q9C6P6"/>
<dbReference type="OMA" id="RPWICNE"/>
<dbReference type="OrthoDB" id="2013942at2759"/>
<dbReference type="PhylomeDB" id="Q9C6P6"/>
<dbReference type="PRO" id="PR:Q9C6P6"/>
<dbReference type="Proteomes" id="UP000006548">
    <property type="component" value="Chromosome 1"/>
</dbReference>
<dbReference type="ExpressionAtlas" id="Q9C6P6">
    <property type="expression patterns" value="baseline and differential"/>
</dbReference>
<dbReference type="GO" id="GO:0005576">
    <property type="term" value="C:extracellular region"/>
    <property type="evidence" value="ECO:0000314"/>
    <property type="project" value="UniProtKB"/>
</dbReference>
<dbReference type="GO" id="GO:0042335">
    <property type="term" value="P:cuticle development"/>
    <property type="evidence" value="ECO:0000315"/>
    <property type="project" value="TAIR"/>
</dbReference>
<dbReference type="GO" id="GO:0009793">
    <property type="term" value="P:embryo development ending in seed dormancy"/>
    <property type="evidence" value="ECO:0000315"/>
    <property type="project" value="UniProtKB"/>
</dbReference>
<dbReference type="GO" id="GO:0048316">
    <property type="term" value="P:seed development"/>
    <property type="evidence" value="ECO:0000315"/>
    <property type="project" value="TAIR"/>
</dbReference>
<dbReference type="InterPro" id="IPR006969">
    <property type="entry name" value="Stig-like"/>
</dbReference>
<dbReference type="PANTHER" id="PTHR33227">
    <property type="entry name" value="STIGMA-SPECIFIC STIG1-LIKE PROTEIN 3"/>
    <property type="match status" value="1"/>
</dbReference>
<dbReference type="PANTHER" id="PTHR33227:SF48">
    <property type="entry name" value="STIGMA-SPECIFIC STIG1-LIKE PROTEIN 4"/>
    <property type="match status" value="1"/>
</dbReference>
<dbReference type="Pfam" id="PF04885">
    <property type="entry name" value="Stig1"/>
    <property type="match status" value="1"/>
</dbReference>